<evidence type="ECO:0000250" key="1"/>
<evidence type="ECO:0000255" key="2">
    <source>
        <dbReference type="PROSITE-ProRule" id="PRU00108"/>
    </source>
</evidence>
<evidence type="ECO:0000269" key="3">
    <source>
    </source>
</evidence>
<evidence type="ECO:0000269" key="4">
    <source>
    </source>
</evidence>
<evidence type="ECO:0000269" key="5">
    <source>
    </source>
</evidence>
<evidence type="ECO:0000269" key="6">
    <source>
    </source>
</evidence>
<evidence type="ECO:0000269" key="7">
    <source>
    </source>
</evidence>
<evidence type="ECO:0000305" key="8"/>
<evidence type="ECO:0007829" key="9">
    <source>
        <dbReference type="PDB" id="2L7Z"/>
    </source>
</evidence>
<organism>
    <name type="scientific">Homo sapiens</name>
    <name type="common">Human</name>
    <dbReference type="NCBI Taxonomy" id="9606"/>
    <lineage>
        <taxon>Eukaryota</taxon>
        <taxon>Metazoa</taxon>
        <taxon>Chordata</taxon>
        <taxon>Craniata</taxon>
        <taxon>Vertebrata</taxon>
        <taxon>Euteleostomi</taxon>
        <taxon>Mammalia</taxon>
        <taxon>Eutheria</taxon>
        <taxon>Euarchontoglires</taxon>
        <taxon>Primates</taxon>
        <taxon>Haplorrhini</taxon>
        <taxon>Catarrhini</taxon>
        <taxon>Hominidae</taxon>
        <taxon>Homo</taxon>
    </lineage>
</organism>
<dbReference type="EMBL" id="U82827">
    <property type="protein sequence ID" value="AAC50993.1"/>
    <property type="molecule type" value="Genomic_DNA"/>
</dbReference>
<dbReference type="EMBL" id="AC004080">
    <property type="status" value="NOT_ANNOTATED_CDS"/>
    <property type="molecule type" value="Genomic_DNA"/>
</dbReference>
<dbReference type="EMBL" id="CH471073">
    <property type="protein sequence ID" value="EAW93890.1"/>
    <property type="molecule type" value="Genomic_DNA"/>
</dbReference>
<dbReference type="EMBL" id="CH236948">
    <property type="protein sequence ID" value="EAL24218.1"/>
    <property type="molecule type" value="Genomic_DNA"/>
</dbReference>
<dbReference type="CCDS" id="CCDS5412.1"/>
<dbReference type="PIR" id="S14932">
    <property type="entry name" value="S14932"/>
</dbReference>
<dbReference type="RefSeq" id="NP_000513.2">
    <property type="nucleotide sequence ID" value="NM_000522.4"/>
</dbReference>
<dbReference type="PDB" id="2L7Z">
    <property type="method" value="NMR"/>
    <property type="chains" value="A=322-388"/>
</dbReference>
<dbReference type="PDBsum" id="2L7Z"/>
<dbReference type="BMRB" id="P31271"/>
<dbReference type="SMR" id="P31271"/>
<dbReference type="BioGRID" id="109449">
    <property type="interactions" value="16"/>
</dbReference>
<dbReference type="FunCoup" id="P31271">
    <property type="interactions" value="865"/>
</dbReference>
<dbReference type="IntAct" id="P31271">
    <property type="interactions" value="5"/>
</dbReference>
<dbReference type="STRING" id="9606.ENSP00000497112"/>
<dbReference type="iPTMnet" id="P31271"/>
<dbReference type="PhosphoSitePlus" id="P31271"/>
<dbReference type="BioMuta" id="HOXA13"/>
<dbReference type="DMDM" id="116242513"/>
<dbReference type="jPOST" id="P31271"/>
<dbReference type="MassIVE" id="P31271"/>
<dbReference type="PaxDb" id="9606-ENSP00000222753"/>
<dbReference type="PeptideAtlas" id="P31271"/>
<dbReference type="ProteomicsDB" id="54772"/>
<dbReference type="Pumba" id="P31271"/>
<dbReference type="Antibodypedia" id="12410">
    <property type="antibodies" value="150 antibodies from 26 providers"/>
</dbReference>
<dbReference type="DNASU" id="3209"/>
<dbReference type="Ensembl" id="ENST00000649031.1">
    <property type="protein sequence ID" value="ENSP00000497112.1"/>
    <property type="gene ID" value="ENSG00000106031.9"/>
</dbReference>
<dbReference type="GeneID" id="3209"/>
<dbReference type="KEGG" id="hsa:3209"/>
<dbReference type="MANE-Select" id="ENST00000649031.1">
    <property type="protein sequence ID" value="ENSP00000497112.1"/>
    <property type="RefSeq nucleotide sequence ID" value="NM_000522.5"/>
    <property type="RefSeq protein sequence ID" value="NP_000513.2"/>
</dbReference>
<dbReference type="UCSC" id="uc003szb.2">
    <property type="organism name" value="human"/>
</dbReference>
<dbReference type="AGR" id="HGNC:5102"/>
<dbReference type="CTD" id="3209"/>
<dbReference type="DisGeNET" id="3209"/>
<dbReference type="GeneCards" id="HOXA13"/>
<dbReference type="GeneReviews" id="HOXA13"/>
<dbReference type="HGNC" id="HGNC:5102">
    <property type="gene designation" value="HOXA13"/>
</dbReference>
<dbReference type="HPA" id="ENSG00000106031">
    <property type="expression patterns" value="Tissue enhanced (cervix, placenta, prostate, seminal vesicle)"/>
</dbReference>
<dbReference type="MalaCards" id="HOXA13"/>
<dbReference type="MIM" id="140000">
    <property type="type" value="phenotype"/>
</dbReference>
<dbReference type="MIM" id="142959">
    <property type="type" value="gene"/>
</dbReference>
<dbReference type="MIM" id="176305">
    <property type="type" value="phenotype"/>
</dbReference>
<dbReference type="neXtProt" id="NX_P31271"/>
<dbReference type="OpenTargets" id="ENSG00000106031"/>
<dbReference type="Orphanet" id="2957">
    <property type="disease" value="Guttmacher syndrome"/>
</dbReference>
<dbReference type="Orphanet" id="2438">
    <property type="disease" value="Hand-foot-genital syndrome"/>
</dbReference>
<dbReference type="PharmGKB" id="PA29379"/>
<dbReference type="VEuPathDB" id="HostDB:ENSG00000106031"/>
<dbReference type="eggNOG" id="KOG0487">
    <property type="taxonomic scope" value="Eukaryota"/>
</dbReference>
<dbReference type="GeneTree" id="ENSGT00940000162322"/>
<dbReference type="HOGENOM" id="CLU_059940_1_0_1"/>
<dbReference type="InParanoid" id="P31271"/>
<dbReference type="OMA" id="CPKEQNQ"/>
<dbReference type="OrthoDB" id="6159439at2759"/>
<dbReference type="PAN-GO" id="P31271">
    <property type="GO annotations" value="3 GO annotations based on evolutionary models"/>
</dbReference>
<dbReference type="PhylomeDB" id="P31271"/>
<dbReference type="TreeFam" id="TF330813"/>
<dbReference type="PathwayCommons" id="P31271"/>
<dbReference type="SignaLink" id="P31271"/>
<dbReference type="SIGNOR" id="P31271"/>
<dbReference type="BioGRID-ORCS" id="3209">
    <property type="hits" value="56 hits in 1173 CRISPR screens"/>
</dbReference>
<dbReference type="CD-CODE" id="38EC0B30">
    <property type="entry name" value="Transcriptional condensate"/>
</dbReference>
<dbReference type="EvolutionaryTrace" id="P31271"/>
<dbReference type="GeneWiki" id="HOXA13"/>
<dbReference type="GenomeRNAi" id="3209"/>
<dbReference type="Pharos" id="P31271">
    <property type="development level" value="Tbio"/>
</dbReference>
<dbReference type="PRO" id="PR:P31271"/>
<dbReference type="Proteomes" id="UP000005640">
    <property type="component" value="Chromosome 7"/>
</dbReference>
<dbReference type="RNAct" id="P31271">
    <property type="molecule type" value="protein"/>
</dbReference>
<dbReference type="Bgee" id="ENSG00000106031">
    <property type="expression patterns" value="Expressed in male germ line stem cell (sensu Vertebrata) in testis and 63 other cell types or tissues"/>
</dbReference>
<dbReference type="GO" id="GO:0000785">
    <property type="term" value="C:chromatin"/>
    <property type="evidence" value="ECO:0000247"/>
    <property type="project" value="NTNU_SB"/>
</dbReference>
<dbReference type="GO" id="GO:0005694">
    <property type="term" value="C:chromosome"/>
    <property type="evidence" value="ECO:0000314"/>
    <property type="project" value="HPA"/>
</dbReference>
<dbReference type="GO" id="GO:0045111">
    <property type="term" value="C:intermediate filament cytoskeleton"/>
    <property type="evidence" value="ECO:0000314"/>
    <property type="project" value="HPA"/>
</dbReference>
<dbReference type="GO" id="GO:0005654">
    <property type="term" value="C:nucleoplasm"/>
    <property type="evidence" value="ECO:0000314"/>
    <property type="project" value="HPA"/>
</dbReference>
<dbReference type="GO" id="GO:0003677">
    <property type="term" value="F:DNA binding"/>
    <property type="evidence" value="ECO:0000304"/>
    <property type="project" value="ProtInc"/>
</dbReference>
<dbReference type="GO" id="GO:0001228">
    <property type="term" value="F:DNA-binding transcription activator activity, RNA polymerase II-specific"/>
    <property type="evidence" value="ECO:0007669"/>
    <property type="project" value="Ensembl"/>
</dbReference>
<dbReference type="GO" id="GO:0000981">
    <property type="term" value="F:DNA-binding transcription factor activity, RNA polymerase II-specific"/>
    <property type="evidence" value="ECO:0000247"/>
    <property type="project" value="NTNU_SB"/>
</dbReference>
<dbReference type="GO" id="GO:0000978">
    <property type="term" value="F:RNA polymerase II cis-regulatory region sequence-specific DNA binding"/>
    <property type="evidence" value="ECO:0000318"/>
    <property type="project" value="GO_Central"/>
</dbReference>
<dbReference type="GO" id="GO:0043565">
    <property type="term" value="F:sequence-specific DNA binding"/>
    <property type="evidence" value="ECO:0000314"/>
    <property type="project" value="NTNU_SB"/>
</dbReference>
<dbReference type="GO" id="GO:1990837">
    <property type="term" value="F:sequence-specific double-stranded DNA binding"/>
    <property type="evidence" value="ECO:0000314"/>
    <property type="project" value="ARUK-UCL"/>
</dbReference>
<dbReference type="GO" id="GO:0048844">
    <property type="term" value="P:artery morphogenesis"/>
    <property type="evidence" value="ECO:0007669"/>
    <property type="project" value="Ensembl"/>
</dbReference>
<dbReference type="GO" id="GO:0060442">
    <property type="term" value="P:branching involved in prostate gland morphogenesis"/>
    <property type="evidence" value="ECO:0007669"/>
    <property type="project" value="Ensembl"/>
</dbReference>
<dbReference type="GO" id="GO:0035115">
    <property type="term" value="P:embryonic forelimb morphogenesis"/>
    <property type="evidence" value="ECO:0007669"/>
    <property type="project" value="Ensembl"/>
</dbReference>
<dbReference type="GO" id="GO:0048619">
    <property type="term" value="P:embryonic hindgut morphogenesis"/>
    <property type="evidence" value="ECO:0007669"/>
    <property type="project" value="Ensembl"/>
</dbReference>
<dbReference type="GO" id="GO:0060847">
    <property type="term" value="P:endothelial cell fate specification"/>
    <property type="evidence" value="ECO:0007669"/>
    <property type="project" value="Ensembl"/>
</dbReference>
<dbReference type="GO" id="GO:0001886">
    <property type="term" value="P:endothelial cell morphogenesis"/>
    <property type="evidence" value="ECO:0007669"/>
    <property type="project" value="Ensembl"/>
</dbReference>
<dbReference type="GO" id="GO:0048839">
    <property type="term" value="P:inner ear development"/>
    <property type="evidence" value="ECO:0007669"/>
    <property type="project" value="Ensembl"/>
</dbReference>
<dbReference type="GO" id="GO:0030539">
    <property type="term" value="P:male genitalia development"/>
    <property type="evidence" value="ECO:0007669"/>
    <property type="project" value="Ensembl"/>
</dbReference>
<dbReference type="GO" id="GO:0097152">
    <property type="term" value="P:mesenchymal cell apoptotic process"/>
    <property type="evidence" value="ECO:0007669"/>
    <property type="project" value="Ensembl"/>
</dbReference>
<dbReference type="GO" id="GO:0140014">
    <property type="term" value="P:mitotic nuclear division"/>
    <property type="evidence" value="ECO:0007669"/>
    <property type="project" value="Ensembl"/>
</dbReference>
<dbReference type="GO" id="GO:2001055">
    <property type="term" value="P:positive regulation of mesenchymal cell apoptotic process"/>
    <property type="evidence" value="ECO:0007669"/>
    <property type="project" value="Ensembl"/>
</dbReference>
<dbReference type="GO" id="GO:0045840">
    <property type="term" value="P:positive regulation of mitotic nuclear division"/>
    <property type="evidence" value="ECO:0007669"/>
    <property type="project" value="Ensembl"/>
</dbReference>
<dbReference type="GO" id="GO:0030510">
    <property type="term" value="P:regulation of BMP signaling pathway"/>
    <property type="evidence" value="ECO:0007669"/>
    <property type="project" value="Ensembl"/>
</dbReference>
<dbReference type="GO" id="GO:0006357">
    <property type="term" value="P:regulation of transcription by RNA polymerase II"/>
    <property type="evidence" value="ECO:0000318"/>
    <property type="project" value="GO_Central"/>
</dbReference>
<dbReference type="GO" id="GO:0033574">
    <property type="term" value="P:response to testosterone"/>
    <property type="evidence" value="ECO:0007669"/>
    <property type="project" value="Ensembl"/>
</dbReference>
<dbReference type="GO" id="GO:0001501">
    <property type="term" value="P:skeletal system development"/>
    <property type="evidence" value="ECO:0000304"/>
    <property type="project" value="ProtInc"/>
</dbReference>
<dbReference type="GO" id="GO:0001894">
    <property type="term" value="P:tissue homeostasis"/>
    <property type="evidence" value="ECO:0007669"/>
    <property type="project" value="Ensembl"/>
</dbReference>
<dbReference type="GO" id="GO:0006366">
    <property type="term" value="P:transcription by RNA polymerase II"/>
    <property type="evidence" value="ECO:0007669"/>
    <property type="project" value="Ensembl"/>
</dbReference>
<dbReference type="GO" id="GO:0001570">
    <property type="term" value="P:vasculogenesis"/>
    <property type="evidence" value="ECO:0007669"/>
    <property type="project" value="Ensembl"/>
</dbReference>
<dbReference type="GO" id="GO:0003281">
    <property type="term" value="P:ventricular septum development"/>
    <property type="evidence" value="ECO:0007669"/>
    <property type="project" value="Ensembl"/>
</dbReference>
<dbReference type="CDD" id="cd00086">
    <property type="entry name" value="homeodomain"/>
    <property type="match status" value="1"/>
</dbReference>
<dbReference type="FunFam" id="1.10.10.60:FF:000130">
    <property type="entry name" value="Homeobox protein Hox-D12"/>
    <property type="match status" value="1"/>
</dbReference>
<dbReference type="Gene3D" id="1.10.10.60">
    <property type="entry name" value="Homeodomain-like"/>
    <property type="match status" value="1"/>
</dbReference>
<dbReference type="InterPro" id="IPR051003">
    <property type="entry name" value="AP_axis_regulatory_Homeobox"/>
</dbReference>
<dbReference type="InterPro" id="IPR001356">
    <property type="entry name" value="HD"/>
</dbReference>
<dbReference type="InterPro" id="IPR017970">
    <property type="entry name" value="Homeobox_CS"/>
</dbReference>
<dbReference type="InterPro" id="IPR009057">
    <property type="entry name" value="Homeodomain-like_sf"/>
</dbReference>
<dbReference type="InterPro" id="IPR022067">
    <property type="entry name" value="HoxA13_N"/>
</dbReference>
<dbReference type="PANTHER" id="PTHR45804:SF3">
    <property type="entry name" value="HOMEOBOX PROTEIN HOX-A13"/>
    <property type="match status" value="1"/>
</dbReference>
<dbReference type="PANTHER" id="PTHR45804">
    <property type="entry name" value="SEGMENTATION PROTEIN FUSHI TARAZU-LIKE PROTEIN"/>
    <property type="match status" value="1"/>
</dbReference>
<dbReference type="Pfam" id="PF00046">
    <property type="entry name" value="Homeodomain"/>
    <property type="match status" value="1"/>
</dbReference>
<dbReference type="Pfam" id="PF12284">
    <property type="entry name" value="HoxA13_N"/>
    <property type="match status" value="1"/>
</dbReference>
<dbReference type="SMART" id="SM00389">
    <property type="entry name" value="HOX"/>
    <property type="match status" value="1"/>
</dbReference>
<dbReference type="SUPFAM" id="SSF46689">
    <property type="entry name" value="Homeodomain-like"/>
    <property type="match status" value="1"/>
</dbReference>
<dbReference type="PROSITE" id="PS00027">
    <property type="entry name" value="HOMEOBOX_1"/>
    <property type="match status" value="1"/>
</dbReference>
<dbReference type="PROSITE" id="PS50071">
    <property type="entry name" value="HOMEOBOX_2"/>
    <property type="match status" value="1"/>
</dbReference>
<gene>
    <name type="primary">HOXA13</name>
    <name type="synonym">HOX1J</name>
</gene>
<proteinExistence type="evidence at protein level"/>
<keyword id="KW-0002">3D-structure</keyword>
<keyword id="KW-0217">Developmental protein</keyword>
<keyword id="KW-0225">Disease variant</keyword>
<keyword id="KW-0238">DNA-binding</keyword>
<keyword id="KW-0371">Homeobox</keyword>
<keyword id="KW-0539">Nucleus</keyword>
<keyword id="KW-1267">Proteomics identification</keyword>
<keyword id="KW-1185">Reference proteome</keyword>
<keyword id="KW-0804">Transcription</keyword>
<keyword id="KW-0805">Transcription regulation</keyword>
<protein>
    <recommendedName>
        <fullName>Homeobox protein Hox-A13</fullName>
    </recommendedName>
    <alternativeName>
        <fullName>Homeobox protein Hox-1J</fullName>
    </alternativeName>
</protein>
<accession>P31271</accession>
<accession>A4D188</accession>
<accession>O43371</accession>
<reference key="1">
    <citation type="journal article" date="1997" name="Nat. Genet.">
        <title>Mutation of HOXA13 in hand-foot-genital syndrome.</title>
        <authorList>
            <person name="Mortlock D.P."/>
            <person name="Innis J.W."/>
        </authorList>
    </citation>
    <scope>NUCLEOTIDE SEQUENCE [GENOMIC DNA]</scope>
</reference>
<reference key="2">
    <citation type="journal article" date="2003" name="Nature">
        <title>The DNA sequence of human chromosome 7.</title>
        <authorList>
            <person name="Hillier L.W."/>
            <person name="Fulton R.S."/>
            <person name="Fulton L.A."/>
            <person name="Graves T.A."/>
            <person name="Pepin K.H."/>
            <person name="Wagner-McPherson C."/>
            <person name="Layman D."/>
            <person name="Maas J."/>
            <person name="Jaeger S."/>
            <person name="Walker R."/>
            <person name="Wylie K."/>
            <person name="Sekhon M."/>
            <person name="Becker M.C."/>
            <person name="O'Laughlin M.D."/>
            <person name="Schaller M.E."/>
            <person name="Fewell G.A."/>
            <person name="Delehaunty K.D."/>
            <person name="Miner T.L."/>
            <person name="Nash W.E."/>
            <person name="Cordes M."/>
            <person name="Du H."/>
            <person name="Sun H."/>
            <person name="Edwards J."/>
            <person name="Bradshaw-Cordum H."/>
            <person name="Ali J."/>
            <person name="Andrews S."/>
            <person name="Isak A."/>
            <person name="Vanbrunt A."/>
            <person name="Nguyen C."/>
            <person name="Du F."/>
            <person name="Lamar B."/>
            <person name="Courtney L."/>
            <person name="Kalicki J."/>
            <person name="Ozersky P."/>
            <person name="Bielicki L."/>
            <person name="Scott K."/>
            <person name="Holmes A."/>
            <person name="Harkins R."/>
            <person name="Harris A."/>
            <person name="Strong C.M."/>
            <person name="Hou S."/>
            <person name="Tomlinson C."/>
            <person name="Dauphin-Kohlberg S."/>
            <person name="Kozlowicz-Reilly A."/>
            <person name="Leonard S."/>
            <person name="Rohlfing T."/>
            <person name="Rock S.M."/>
            <person name="Tin-Wollam A.-M."/>
            <person name="Abbott A."/>
            <person name="Minx P."/>
            <person name="Maupin R."/>
            <person name="Strowmatt C."/>
            <person name="Latreille P."/>
            <person name="Miller N."/>
            <person name="Johnson D."/>
            <person name="Murray J."/>
            <person name="Woessner J.P."/>
            <person name="Wendl M.C."/>
            <person name="Yang S.-P."/>
            <person name="Schultz B.R."/>
            <person name="Wallis J.W."/>
            <person name="Spieth J."/>
            <person name="Bieri T.A."/>
            <person name="Nelson J.O."/>
            <person name="Berkowicz N."/>
            <person name="Wohldmann P.E."/>
            <person name="Cook L.L."/>
            <person name="Hickenbotham M.T."/>
            <person name="Eldred J."/>
            <person name="Williams D."/>
            <person name="Bedell J.A."/>
            <person name="Mardis E.R."/>
            <person name="Clifton S.W."/>
            <person name="Chissoe S.L."/>
            <person name="Marra M.A."/>
            <person name="Raymond C."/>
            <person name="Haugen E."/>
            <person name="Gillett W."/>
            <person name="Zhou Y."/>
            <person name="James R."/>
            <person name="Phelps K."/>
            <person name="Iadanoto S."/>
            <person name="Bubb K."/>
            <person name="Simms E."/>
            <person name="Levy R."/>
            <person name="Clendenning J."/>
            <person name="Kaul R."/>
            <person name="Kent W.J."/>
            <person name="Furey T.S."/>
            <person name="Baertsch R.A."/>
            <person name="Brent M.R."/>
            <person name="Keibler E."/>
            <person name="Flicek P."/>
            <person name="Bork P."/>
            <person name="Suyama M."/>
            <person name="Bailey J.A."/>
            <person name="Portnoy M.E."/>
            <person name="Torrents D."/>
            <person name="Chinwalla A.T."/>
            <person name="Gish W.R."/>
            <person name="Eddy S.R."/>
            <person name="McPherson J.D."/>
            <person name="Olson M.V."/>
            <person name="Eichler E.E."/>
            <person name="Green E.D."/>
            <person name="Waterston R.H."/>
            <person name="Wilson R.K."/>
        </authorList>
    </citation>
    <scope>NUCLEOTIDE SEQUENCE [LARGE SCALE GENOMIC DNA]</scope>
</reference>
<reference key="3">
    <citation type="submission" date="2005-07" db="EMBL/GenBank/DDBJ databases">
        <authorList>
            <person name="Mural R.J."/>
            <person name="Istrail S."/>
            <person name="Sutton G.G."/>
            <person name="Florea L."/>
            <person name="Halpern A.L."/>
            <person name="Mobarry C.M."/>
            <person name="Lippert R."/>
            <person name="Walenz B."/>
            <person name="Shatkay H."/>
            <person name="Dew I."/>
            <person name="Miller J.R."/>
            <person name="Flanigan M.J."/>
            <person name="Edwards N.J."/>
            <person name="Bolanos R."/>
            <person name="Fasulo D."/>
            <person name="Halldorsson B.V."/>
            <person name="Hannenhalli S."/>
            <person name="Turner R."/>
            <person name="Yooseph S."/>
            <person name="Lu F."/>
            <person name="Nusskern D.R."/>
            <person name="Shue B.C."/>
            <person name="Zheng X.H."/>
            <person name="Zhong F."/>
            <person name="Delcher A.L."/>
            <person name="Huson D.H."/>
            <person name="Kravitz S.A."/>
            <person name="Mouchard L."/>
            <person name="Reinert K."/>
            <person name="Remington K.A."/>
            <person name="Clark A.G."/>
            <person name="Waterman M.S."/>
            <person name="Eichler E.E."/>
            <person name="Adams M.D."/>
            <person name="Hunkapiller M.W."/>
            <person name="Myers E.W."/>
            <person name="Venter J.C."/>
        </authorList>
    </citation>
    <scope>NUCLEOTIDE SEQUENCE [LARGE SCALE GENOMIC DNA]</scope>
</reference>
<reference key="4">
    <citation type="journal article" date="2003" name="Science">
        <title>Human chromosome 7: DNA sequence and biology.</title>
        <authorList>
            <person name="Scherer S.W."/>
            <person name="Cheung J."/>
            <person name="MacDonald J.R."/>
            <person name="Osborne L.R."/>
            <person name="Nakabayashi K."/>
            <person name="Herbrick J.-A."/>
            <person name="Carson A.R."/>
            <person name="Parker-Katiraee L."/>
            <person name="Skaug J."/>
            <person name="Khaja R."/>
            <person name="Zhang J."/>
            <person name="Hudek A.K."/>
            <person name="Li M."/>
            <person name="Haddad M."/>
            <person name="Duggan G.E."/>
            <person name="Fernandez B.A."/>
            <person name="Kanematsu E."/>
            <person name="Gentles S."/>
            <person name="Christopoulos C.C."/>
            <person name="Choufani S."/>
            <person name="Kwasnicka D."/>
            <person name="Zheng X.H."/>
            <person name="Lai Z."/>
            <person name="Nusskern D.R."/>
            <person name="Zhang Q."/>
            <person name="Gu Z."/>
            <person name="Lu F."/>
            <person name="Zeesman S."/>
            <person name="Nowaczyk M.J."/>
            <person name="Teshima I."/>
            <person name="Chitayat D."/>
            <person name="Shuman C."/>
            <person name="Weksberg R."/>
            <person name="Zackai E.H."/>
            <person name="Grebe T.A."/>
            <person name="Cox S.R."/>
            <person name="Kirkpatrick S.J."/>
            <person name="Rahman N."/>
            <person name="Friedman J.M."/>
            <person name="Heng H.H.Q."/>
            <person name="Pelicci P.G."/>
            <person name="Lo-Coco F."/>
            <person name="Belloni E."/>
            <person name="Shaffer L.G."/>
            <person name="Pober B."/>
            <person name="Morton C.C."/>
            <person name="Gusella J.F."/>
            <person name="Bruns G.A.P."/>
            <person name="Korf B.R."/>
            <person name="Quade B.J."/>
            <person name="Ligon A.H."/>
            <person name="Ferguson H."/>
            <person name="Higgins A.W."/>
            <person name="Leach N.T."/>
            <person name="Herrick S.R."/>
            <person name="Lemyre E."/>
            <person name="Farra C.G."/>
            <person name="Kim H.-G."/>
            <person name="Summers A.M."/>
            <person name="Gripp K.W."/>
            <person name="Roberts W."/>
            <person name="Szatmari P."/>
            <person name="Winsor E.J.T."/>
            <person name="Grzeschik K.-H."/>
            <person name="Teebi A."/>
            <person name="Minassian B.A."/>
            <person name="Kere J."/>
            <person name="Armengol L."/>
            <person name="Pujana M.A."/>
            <person name="Estivill X."/>
            <person name="Wilson M.D."/>
            <person name="Koop B.F."/>
            <person name="Tosi S."/>
            <person name="Moore G.E."/>
            <person name="Boright A.P."/>
            <person name="Zlotorynski E."/>
            <person name="Kerem B."/>
            <person name="Kroisel P.M."/>
            <person name="Petek E."/>
            <person name="Oscier D.G."/>
            <person name="Mould S.J."/>
            <person name="Doehner H."/>
            <person name="Doehner K."/>
            <person name="Rommens J.M."/>
            <person name="Vincent J.B."/>
            <person name="Venter J.C."/>
            <person name="Li P.W."/>
            <person name="Mural R.J."/>
            <person name="Adams M.D."/>
            <person name="Tsui L.-C."/>
        </authorList>
    </citation>
    <scope>NUCLEOTIDE SEQUENCE [LARGE SCALE GENOMIC DNA]</scope>
</reference>
<reference key="5">
    <citation type="journal article" date="1989" name="Nucleic Acids Res.">
        <title>The human HOX gene family.</title>
        <authorList>
            <person name="Acampora D."/>
            <person name="D'Esposito M."/>
            <person name="Faiella A."/>
            <person name="Pannese M."/>
            <person name="Migliaccio E."/>
            <person name="Morelli F."/>
            <person name="Stornaiuolo A."/>
            <person name="Nigro V."/>
            <person name="Simeone A."/>
            <person name="Boncinelli E."/>
        </authorList>
    </citation>
    <scope>NUCLEOTIDE SEQUENCE [GENOMIC DNA] OF 322-387</scope>
</reference>
<reference key="6">
    <citation type="journal article" date="2011" name="PLoS ONE">
        <title>Structural basis for sequence specific DNA binding and protein dimerization of HOXA13.</title>
        <authorList>
            <person name="Zhang Y."/>
            <person name="Larsen C.A."/>
            <person name="Stadler H.S."/>
            <person name="Ames J.B."/>
        </authorList>
    </citation>
    <scope>STRUCTURE BY NMR OF 322-388 IN COMPLEX WITH DNA</scope>
    <scope>SUBUNIT</scope>
</reference>
<reference key="7">
    <citation type="journal article" date="2000" name="Am. J. Hum. Genet.">
        <title>Novel HOXA13 mutations and the phenotypic spectrum of hand-foot-genital syndrome.</title>
        <authorList>
            <person name="Goodman F.R."/>
            <person name="Bacchelli C."/>
            <person name="Brady A.F."/>
            <person name="Brueton L.A."/>
            <person name="Fryns J.-P."/>
            <person name="Mortlock D.P."/>
            <person name="Innis J.W."/>
            <person name="Holmes L.B."/>
            <person name="Donnenfeld A.E."/>
            <person name="Feingold M."/>
            <person name="Beemer F.A."/>
            <person name="Hennekam R.C.M."/>
            <person name="Scambler P.J."/>
        </authorList>
    </citation>
    <scope>VARIANTS HFG HIS-372 AND ALA-ALA-ALA-ALA-ALA-ALA-ALA-ALA-129 INS</scope>
</reference>
<reference key="8">
    <citation type="journal article" date="2002" name="Hum. Genet.">
        <title>A novel stable polyalanine [poly(A)] expansion in the HOXA13 gene associated with hand-foot-genital syndrome: proper function of poly(A)-harbouring transcription factors depends on a critical repeat length?</title>
        <authorList>
            <person name="Utsch B."/>
            <person name="Becker K."/>
            <person name="Brock D."/>
            <person name="Lentze M.J."/>
            <person name="Bidlingmaier F."/>
            <person name="Ludwig M."/>
        </authorList>
    </citation>
    <scope>VARIANT HFG ALA-ALA-ALA-ALA-ALA-ALA-125 INS</scope>
</reference>
<reference key="9">
    <citation type="journal article" date="2002" name="Hum. Mutat.">
        <title>A HOXA13 allele with a missense mutation in the homeobox and a dinucleotide deletion in the promoter underlies Guttmacher syndrome.</title>
        <authorList>
            <person name="Innis J.W."/>
            <person name="Goodman F.R."/>
            <person name="Bacchelli C."/>
            <person name="Williams T.M."/>
            <person name="Mortlock D.P."/>
            <person name="Sateesh P."/>
            <person name="Scambler P.J."/>
            <person name="McKinnon W."/>
            <person name="Guttmacher A.E."/>
        </authorList>
    </citation>
    <scope>VARIANT GUTTS LEU-371</scope>
</reference>
<reference key="10">
    <citation type="journal article" date="2014" name="Am. J. Med. Genet. A">
        <title>Severe manifestations of hand-foot-genital syndrome associated with a novel HOXA13 mutation.</title>
        <authorList>
            <person name="Imagawa E."/>
            <person name="Kayserili H."/>
            <person name="Nishimura G."/>
            <person name="Nakashima M."/>
            <person name="Tsurusaki Y."/>
            <person name="Saitsu H."/>
            <person name="Ikegawa S."/>
            <person name="Matsumoto N."/>
            <person name="Miyake N."/>
        </authorList>
    </citation>
    <scope>VARIANT HFG PHE-368</scope>
</reference>
<reference key="11">
    <citation type="journal article" date="2016" name="Am. J. Med. Genet. A">
        <title>Dual genetic diagnoses: Atypical hand-foot-genital syndrome and developmental delay due to de novo mutations in HOXA13 and NRXN1.</title>
        <authorList>
            <person name="Wallis M."/>
            <person name="Tsurusaki Y."/>
            <person name="Burgess T."/>
            <person name="Borzi P."/>
            <person name="Matsumoto N."/>
            <person name="Miyake N."/>
            <person name="True D."/>
            <person name="Patel C."/>
        </authorList>
    </citation>
    <scope>VARIANT HFG PHE-375</scope>
</reference>
<name>HXA13_HUMAN</name>
<sequence>MTASVLLHPRWIEPTVMFLYDNGGGLVADELNKNMEGAAAAAAAAAAAAAAGAGGGGFPHPAAAAAGGNFSVAAAAAAAAAAAANQCRNLMAHPAPLAPGAASAYSSAPGEAPPSAAAAAAAAAAAAAAAAAASSSGGPGPAGPAGAEAAKQCSPCSAAAQSSSGPAALPYGYFGSGYYPCARMGPHPNAIKSCAQPASAAAAAAFADKYMDTAGPAAEEFSSRAKEFAFYHQGYAAGPYHHHQPMPGYLDMPVVPGLGGPGESRHEPLGLPMESYQPWALPNGWNGQMYCPKEQAQPPHLWKSTLPDVVSHPSDASSYRRGRKKRVPYTKVQLKELEREYATNKFITKDKRRRISATTNLSERQVTIWFQNRRVKEKKVINKLKTTS</sequence>
<feature type="chain" id="PRO_0000200101" description="Homeobox protein Hox-A13">
    <location>
        <begin position="1"/>
        <end position="388"/>
    </location>
</feature>
<feature type="DNA-binding region" description="Homeobox" evidence="2">
    <location>
        <begin position="322"/>
        <end position="381"/>
    </location>
</feature>
<feature type="sequence variant" id="VAR_017773" description="In HFG." evidence="5">
    <original>A</original>
    <variation>AAAAAAA</variation>
    <location>
        <position position="125"/>
    </location>
</feature>
<feature type="sequence variant" id="VAR_017774" description="In HFG.">
    <original>A</original>
    <variation>AAAAAAAAA</variation>
    <location>
        <position position="129"/>
    </location>
</feature>
<feature type="sequence variant" id="VAR_075341" description="In HFG; severe phenotype overlapping with Guttmacher syndrome; dbSNP:rs2115471148." evidence="6">
    <original>I</original>
    <variation>F</variation>
    <location>
        <position position="368"/>
    </location>
</feature>
<feature type="sequence variant" id="VAR_017775" description="In GUTTS; dbSNP:rs2115471123." evidence="4">
    <original>Q</original>
    <variation>L</variation>
    <location>
        <position position="371"/>
    </location>
</feature>
<feature type="sequence variant" id="VAR_017776" description="In HFG; severe; dbSNP:rs121912542." evidence="3">
    <original>N</original>
    <variation>H</variation>
    <location>
        <position position="372"/>
    </location>
</feature>
<feature type="sequence variant" id="VAR_075342" description="In HFG." evidence="7">
    <original>V</original>
    <variation>F</variation>
    <location>
        <position position="375"/>
    </location>
</feature>
<feature type="sequence conflict" description="In Ref. 1; AAC50993." evidence="8" ref="1">
    <original>G</original>
    <variation>A</variation>
    <location>
        <position position="146"/>
    </location>
</feature>
<feature type="sequence conflict" description="In Ref. 1; AAC50993." evidence="8" ref="1">
    <original>H</original>
    <variation>P</variation>
    <location>
        <position position="187"/>
    </location>
</feature>
<feature type="sequence conflict" description="In Ref. 1; AAC50993." evidence="8" ref="1">
    <original>A</original>
    <variation>P</variation>
    <location>
        <position position="195"/>
    </location>
</feature>
<feature type="sequence conflict" description="In Ref. 1; AAC50993." evidence="8" ref="1">
    <original>A</original>
    <variation>P</variation>
    <location>
        <position position="198"/>
    </location>
</feature>
<feature type="helix" evidence="9">
    <location>
        <begin position="331"/>
        <end position="343"/>
    </location>
</feature>
<feature type="helix" evidence="9">
    <location>
        <begin position="349"/>
        <end position="359"/>
    </location>
</feature>
<feature type="helix" evidence="9">
    <location>
        <begin position="364"/>
        <end position="377"/>
    </location>
</feature>
<feature type="strand" evidence="9">
    <location>
        <begin position="380"/>
        <end position="385"/>
    </location>
</feature>
<comment type="function">
    <text>Sequence-specific, AT-rich binding transcription factor which is part of a developmental regulatory system that provides cells with specific positional identities on the anterior-posterior axis.</text>
</comment>
<comment type="function">
    <text>Sequence-specific transcription factor which is part of a developmental regulatory system that provides cells with specific positional identities on the anterior-posterior axis.</text>
</comment>
<comment type="subunit">
    <text evidence="1">Binds DNA as a homodimer. Interacts with MEIS1, MEIS2 and MEIS3 (By similarity).</text>
</comment>
<comment type="subcellular location">
    <subcellularLocation>
        <location>Nucleus</location>
    </subcellularLocation>
</comment>
<comment type="disease" evidence="3 5 6 7">
    <disease id="DI-01694">
        <name>Hand-foot-genital syndrome</name>
        <acronym>HFG</acronym>
        <description>A disorder characterized by limb and genitourinary anomalies. Clinical features include small feet with unusually short great toes and abnormal thumbs. Females with the disorder have duplication of the genital tract.</description>
        <dbReference type="MIM" id="140000"/>
    </disease>
    <text>The disease is caused by variants affecting the gene represented in this entry.</text>
</comment>
<comment type="disease" evidence="4">
    <disease id="DI-01691">
        <name>Guttmacher syndrome</name>
        <acronym>GUTTS</acronym>
        <description>Dominantly inherited combination of distal limb and genital tract abnormalities. It has several features in common with hand-foot-genital syndrome, including hypoplastic first digits and hypospadias. Typical features not seen in hand-foot-genital syndrome include postaxial polydactyly of the hands and uniphalangeal second toes with absent nails.</description>
        <dbReference type="MIM" id="176305"/>
    </disease>
    <text>The disease is caused by variants affecting the gene represented in this entry.</text>
</comment>
<comment type="similarity">
    <text evidence="8">Belongs to the Abd-B homeobox family.</text>
</comment>